<keyword id="KW-0175">Coiled coil</keyword>
<keyword id="KW-0963">Cytoplasm</keyword>
<keyword id="KW-1017">Isopeptide bond</keyword>
<keyword id="KW-0597">Phosphoprotein</keyword>
<keyword id="KW-1185">Reference proteome</keyword>
<keyword id="KW-0832">Ubl conjugation</keyword>
<organism>
    <name type="scientific">Pongo abelii</name>
    <name type="common">Sumatran orangutan</name>
    <name type="synonym">Pongo pygmaeus abelii</name>
    <dbReference type="NCBI Taxonomy" id="9601"/>
    <lineage>
        <taxon>Eukaryota</taxon>
        <taxon>Metazoa</taxon>
        <taxon>Chordata</taxon>
        <taxon>Craniata</taxon>
        <taxon>Vertebrata</taxon>
        <taxon>Euteleostomi</taxon>
        <taxon>Mammalia</taxon>
        <taxon>Eutheria</taxon>
        <taxon>Euarchontoglires</taxon>
        <taxon>Primates</taxon>
        <taxon>Haplorrhini</taxon>
        <taxon>Catarrhini</taxon>
        <taxon>Hominidae</taxon>
        <taxon>Pongo</taxon>
    </lineage>
</organism>
<protein>
    <recommendedName>
        <fullName evidence="6">Protein ITPRID2</fullName>
    </recommendedName>
    <alternativeName>
        <fullName evidence="6">ITPR-interacting domain-containing protein 2</fullName>
    </alternativeName>
    <alternativeName>
        <fullName evidence="2">Sperm-specific antigen 2 homolog</fullName>
    </alternativeName>
</protein>
<sequence>MTTEDHLLRTASQHSDSSGFAEDSTDCLSLNHLQVQESLQAMGSSADSCDSETTVTSLGEDLATPTAQDQPYFNESEEESLVPLQKGLEKAAAIADRRKSGSQDFPQCNTIENPGTKQSTCSPGDRVTEITEVEEDLFPAETVELLREASAESDVDKSSECEFTQYTTHHILKSLASIEAKCSDMSSENTTGPPSSVDRVNTALQRAQMKVCTLSNQRMGRSLLKSKDLLKQRYLFAKVGYPLRRSQSLPTTLLSPVRVVSSVNVRLSPGKETRCSPPSFTYKYTPEEEQELEKRAMEHDGQSLVKSTIFISPSSVKKEEAPQSEAPRVEECHHGRTPTCSRLAPPPMSQSTCSLHSIHSEWQERPLCEHTRTLSTHSVPNISGATCSAFASPFGCPYSHRHATYPYRVCSVNPPSAIEMQLRRVLHDIRNSLQNLSQYPMMRGPDPAAAPYSTQKSSVLPLYENTFQELQVMRRSLNLFRTQMMDLELAMLRQQTMVYHHMTEEERFEVDQLQGLRNSVRMELQDLELQLEERLLGLEEQLRAVRMPSPFRSSALMGMCGSRSADNLSCPSPLNVMEPVTELMQEQSYLKSELGLGLGEMGFEIPPGESSESVFSQATSESSSVCSGPSHANRRTGVPSTASVGKPKTPLVARKKVFRASVALTPTAPSRTGSVQTPPDLESSEEVDAAEEAPEVVGPKSEVEEGHGKLPSMPAAEEMHKNVEQDELQQVIREIKESIVGEIRREIVSGLLAAVSSSKASNSKQDNH</sequence>
<evidence type="ECO:0000250" key="1"/>
<evidence type="ECO:0000250" key="2">
    <source>
        <dbReference type="UniProtKB" id="P28290"/>
    </source>
</evidence>
<evidence type="ECO:0000250" key="3">
    <source>
        <dbReference type="UniProtKB" id="Q922B9"/>
    </source>
</evidence>
<evidence type="ECO:0000255" key="4"/>
<evidence type="ECO:0000256" key="5">
    <source>
        <dbReference type="SAM" id="MobiDB-lite"/>
    </source>
</evidence>
<evidence type="ECO:0000305" key="6"/>
<proteinExistence type="evidence at transcript level"/>
<accession>Q5REU9</accession>
<accession>Q5REV0</accession>
<reference key="1">
    <citation type="submission" date="2004-11" db="EMBL/GenBank/DDBJ databases">
        <authorList>
            <consortium name="The German cDNA consortium"/>
        </authorList>
    </citation>
    <scope>NUCLEOTIDE SEQUENCE [LARGE SCALE MRNA]</scope>
    <source>
        <tissue>Kidney</tissue>
    </source>
</reference>
<dbReference type="EMBL" id="CR857416">
    <property type="protein sequence ID" value="CAH89707.1"/>
    <property type="molecule type" value="mRNA"/>
</dbReference>
<dbReference type="EMBL" id="CR857417">
    <property type="protein sequence ID" value="CAH89708.1"/>
    <property type="molecule type" value="mRNA"/>
</dbReference>
<dbReference type="RefSeq" id="NP_001124775.1">
    <property type="nucleotide sequence ID" value="NM_001131303.1"/>
</dbReference>
<dbReference type="RefSeq" id="NP_001128928.1">
    <property type="nucleotide sequence ID" value="NM_001135456.1"/>
</dbReference>
<dbReference type="SMR" id="Q5REU9"/>
<dbReference type="STRING" id="9601.ENSPPYP00000014512"/>
<dbReference type="GeneID" id="100189884"/>
<dbReference type="KEGG" id="pon:100189884"/>
<dbReference type="CTD" id="6744"/>
<dbReference type="eggNOG" id="ENOG502QSG8">
    <property type="taxonomic scope" value="Eukaryota"/>
</dbReference>
<dbReference type="InParanoid" id="Q5REU9"/>
<dbReference type="OrthoDB" id="6088188at2759"/>
<dbReference type="Proteomes" id="UP000001595">
    <property type="component" value="Unplaced"/>
</dbReference>
<dbReference type="GO" id="GO:0005737">
    <property type="term" value="C:cytoplasm"/>
    <property type="evidence" value="ECO:0007669"/>
    <property type="project" value="UniProtKB-SubCell"/>
</dbReference>
<dbReference type="InterPro" id="IPR029326">
    <property type="entry name" value="SSFA2_C"/>
</dbReference>
<dbReference type="InterPro" id="IPR043444">
    <property type="entry name" value="TESPA1-like"/>
</dbReference>
<dbReference type="PANTHER" id="PTHR17469:SF11">
    <property type="entry name" value="PROTEIN ITPRID2"/>
    <property type="match status" value="1"/>
</dbReference>
<dbReference type="PANTHER" id="PTHR17469">
    <property type="entry name" value="SPERM SPECIFIC ANTIGEN 2-RELATED"/>
    <property type="match status" value="1"/>
</dbReference>
<dbReference type="Pfam" id="PF14723">
    <property type="entry name" value="SSFA2_C"/>
    <property type="match status" value="1"/>
</dbReference>
<feature type="chain" id="PRO_0000280707" description="Protein ITPRID2">
    <location>
        <begin position="1"/>
        <end position="768"/>
    </location>
</feature>
<feature type="region of interest" description="Disordered" evidence="5">
    <location>
        <begin position="1"/>
        <end position="24"/>
    </location>
</feature>
<feature type="region of interest" description="Disordered" evidence="5">
    <location>
        <begin position="39"/>
        <end position="78"/>
    </location>
</feature>
<feature type="region of interest" description="Disordered" evidence="5">
    <location>
        <begin position="98"/>
        <end position="124"/>
    </location>
</feature>
<feature type="region of interest" description="Disordered" evidence="5">
    <location>
        <begin position="315"/>
        <end position="338"/>
    </location>
</feature>
<feature type="region of interest" description="Disordered" evidence="5">
    <location>
        <begin position="605"/>
        <end position="647"/>
    </location>
</feature>
<feature type="region of interest" description="Disordered" evidence="5">
    <location>
        <begin position="663"/>
        <end position="718"/>
    </location>
</feature>
<feature type="coiled-coil region" evidence="4">
    <location>
        <begin position="468"/>
        <end position="546"/>
    </location>
</feature>
<feature type="compositionally biased region" description="Polar residues" evidence="5">
    <location>
        <begin position="39"/>
        <end position="57"/>
    </location>
</feature>
<feature type="compositionally biased region" description="Polar residues" evidence="5">
    <location>
        <begin position="102"/>
        <end position="122"/>
    </location>
</feature>
<feature type="compositionally biased region" description="Basic and acidic residues" evidence="5">
    <location>
        <begin position="316"/>
        <end position="334"/>
    </location>
</feature>
<feature type="compositionally biased region" description="Polar residues" evidence="5">
    <location>
        <begin position="610"/>
        <end position="627"/>
    </location>
</feature>
<feature type="compositionally biased region" description="Polar residues" evidence="5">
    <location>
        <begin position="667"/>
        <end position="677"/>
    </location>
</feature>
<feature type="compositionally biased region" description="Acidic residues" evidence="5">
    <location>
        <begin position="682"/>
        <end position="694"/>
    </location>
</feature>
<feature type="modified residue" description="Phosphoserine" evidence="2">
    <location>
        <position position="153"/>
    </location>
</feature>
<feature type="modified residue" description="Phosphoserine" evidence="2">
    <location>
        <position position="177"/>
    </location>
</feature>
<feature type="modified residue" description="Phosphoserine" evidence="2">
    <location>
        <position position="246"/>
    </location>
</feature>
<feature type="modified residue" description="Phosphoserine" evidence="2">
    <location>
        <position position="248"/>
    </location>
</feature>
<feature type="modified residue" description="Phosphoserine" evidence="2">
    <location>
        <position position="255"/>
    </location>
</feature>
<feature type="modified residue" description="Phosphoserine" evidence="2">
    <location>
        <position position="268"/>
    </location>
</feature>
<feature type="modified residue" description="Phosphoserine" evidence="2">
    <location>
        <position position="276"/>
    </location>
</feature>
<feature type="modified residue" description="Phosphoserine" evidence="2">
    <location>
        <position position="312"/>
    </location>
</feature>
<feature type="modified residue" description="Phosphoserine" evidence="3">
    <location>
        <position position="378"/>
    </location>
</feature>
<feature type="modified residue" description="Phosphoserine" evidence="2">
    <location>
        <position position="411"/>
    </location>
</feature>
<feature type="modified residue" description="Phosphoserine" evidence="3">
    <location>
        <position position="549"/>
    </location>
</feature>
<feature type="modified residue" description="Phosphoserine" evidence="3">
    <location>
        <position position="564"/>
    </location>
</feature>
<feature type="modified residue" description="Phosphoserine" evidence="3">
    <location>
        <position position="569"/>
    </location>
</feature>
<feature type="modified residue" description="Phosphoserine" evidence="2">
    <location>
        <position position="572"/>
    </location>
</feature>
<feature type="modified residue" description="Phosphoserine" evidence="2">
    <location>
        <position position="627"/>
    </location>
</feature>
<feature type="modified residue" description="Phosphoserine" evidence="2">
    <location>
        <position position="643"/>
    </location>
</feature>
<feature type="modified residue" description="Phosphothreonine" evidence="2">
    <location>
        <position position="665"/>
    </location>
</feature>
<feature type="modified residue" description="Phosphoserine" evidence="2">
    <location>
        <position position="670"/>
    </location>
</feature>
<feature type="modified residue" description="Phosphothreonine" evidence="2">
    <location>
        <position position="677"/>
    </location>
</feature>
<feature type="cross-link" description="Glycyl lysine isopeptide (Lys-Gly) (interchain with G-Cter in SUMO2)" evidence="2">
    <location>
        <position position="317"/>
    </location>
</feature>
<feature type="sequence conflict" description="In Ref. 1; CAH89707." evidence="6" ref="1">
    <original>T</original>
    <variation>I</variation>
    <location>
        <position position="25"/>
    </location>
</feature>
<feature type="sequence conflict" description="In Ref. 1; CAH89707." evidence="6" ref="1">
    <original>R</original>
    <variation>G</variation>
    <location>
        <position position="97"/>
    </location>
</feature>
<feature type="sequence conflict" description="In Ref. 1; CAH89707." evidence="6" ref="1">
    <original>N</original>
    <variation>S</variation>
    <location>
        <position position="201"/>
    </location>
</feature>
<feature type="sequence conflict" description="In Ref. 1; CAH89707." evidence="6" ref="1">
    <original>E</original>
    <variation>G</variation>
    <location>
        <position position="298"/>
    </location>
</feature>
<feature type="sequence conflict" description="In Ref. 1; CAH89707." evidence="6" ref="1">
    <original>I</original>
    <variation>V</variation>
    <location>
        <position position="429"/>
    </location>
</feature>
<feature type="sequence conflict" description="In Ref. 1; CAH89708." evidence="6" ref="1">
    <original>L</original>
    <variation>Q</variation>
    <location>
        <position position="531"/>
    </location>
</feature>
<feature type="sequence conflict" description="In Ref. 1; CAH89708." evidence="6" ref="1">
    <original>G</original>
    <variation>R</variation>
    <location>
        <position position="595"/>
    </location>
</feature>
<comment type="subcellular location">
    <subcellularLocation>
        <location evidence="1">Cytoplasm</location>
    </subcellularLocation>
    <text evidence="1">Located near the plasma membrane. Associated with actin filaments. May also exist as a membrane-bound form with extracellular regions (By similarity).</text>
</comment>
<name>ITPI2_PONAB</name>
<gene>
    <name evidence="2" type="primary">ITPRID2</name>
    <name evidence="2" type="synonym">SSFA2</name>
</gene>